<reference key="1">
    <citation type="journal article" date="2008" name="Proc. Natl. Acad. Sci. U.S.A.">
        <title>The genome of Clostridium kluyveri, a strict anaerobe with unique metabolic features.</title>
        <authorList>
            <person name="Seedorf H."/>
            <person name="Fricke W.F."/>
            <person name="Veith B."/>
            <person name="Brueggemann H."/>
            <person name="Liesegang H."/>
            <person name="Strittmatter A."/>
            <person name="Miethke M."/>
            <person name="Buckel W."/>
            <person name="Hinderberger J."/>
            <person name="Li F."/>
            <person name="Hagemeier C."/>
            <person name="Thauer R.K."/>
            <person name="Gottschalk G."/>
        </authorList>
    </citation>
    <scope>NUCLEOTIDE SEQUENCE [LARGE SCALE GENOMIC DNA]</scope>
    <source>
        <strain>ATCC 8527 / DSM 555 / NBRC 12016 / NCIMB 10680 / K1</strain>
    </source>
</reference>
<name>SPEE_CLOK5</name>
<comment type="function">
    <text evidence="1">Catalyzes the irreversible transfer of a propylamine group from the amino donor S-adenosylmethioninamine (decarboxy-AdoMet) to putrescine (1,4-diaminobutane) to yield spermidine.</text>
</comment>
<comment type="catalytic activity">
    <reaction evidence="1">
        <text>S-adenosyl 3-(methylsulfanyl)propylamine + putrescine = S-methyl-5'-thioadenosine + spermidine + H(+)</text>
        <dbReference type="Rhea" id="RHEA:12721"/>
        <dbReference type="ChEBI" id="CHEBI:15378"/>
        <dbReference type="ChEBI" id="CHEBI:17509"/>
        <dbReference type="ChEBI" id="CHEBI:57443"/>
        <dbReference type="ChEBI" id="CHEBI:57834"/>
        <dbReference type="ChEBI" id="CHEBI:326268"/>
        <dbReference type="EC" id="2.5.1.16"/>
    </reaction>
</comment>
<comment type="pathway">
    <text evidence="1">Amine and polyamine biosynthesis; spermidine biosynthesis; spermidine from putrescine: step 1/1.</text>
</comment>
<comment type="subunit">
    <text evidence="1">Homodimer or homotetramer.</text>
</comment>
<comment type="subcellular location">
    <subcellularLocation>
        <location evidence="1">Cytoplasm</location>
    </subcellularLocation>
</comment>
<comment type="similarity">
    <text evidence="1">Belongs to the spermidine/spermine synthase family.</text>
</comment>
<accession>A5N219</accession>
<organism>
    <name type="scientific">Clostridium kluyveri (strain ATCC 8527 / DSM 555 / NBRC 12016 / NCIMB 10680 / K1)</name>
    <dbReference type="NCBI Taxonomy" id="431943"/>
    <lineage>
        <taxon>Bacteria</taxon>
        <taxon>Bacillati</taxon>
        <taxon>Bacillota</taxon>
        <taxon>Clostridia</taxon>
        <taxon>Eubacteriales</taxon>
        <taxon>Clostridiaceae</taxon>
        <taxon>Clostridium</taxon>
    </lineage>
</organism>
<evidence type="ECO:0000255" key="1">
    <source>
        <dbReference type="HAMAP-Rule" id="MF_00198"/>
    </source>
</evidence>
<keyword id="KW-0963">Cytoplasm</keyword>
<keyword id="KW-0620">Polyamine biosynthesis</keyword>
<keyword id="KW-1185">Reference proteome</keyword>
<keyword id="KW-0745">Spermidine biosynthesis</keyword>
<keyword id="KW-0808">Transferase</keyword>
<sequence length="275" mass="31469">MDLWLREGQIEDAAMTYKIKETLVTKKTKYQELAIVDTYALGRMLVLDGIVQTTVKDEYVYHEMITHIPLFTHPNPQKVLIVGGGDGGTVREVLKHETVEKVVLCEIDEQVVYECKKYLPEISCELDNPKCEVFIGDGIKYVHQHRNEFDVIIVDSTDPFGAAEGLFGGSFYKEIYNCLTEDGIFIAQTETPFYLPEVVKQVYKDAKEIFPITRLFMAGIPTYPSGFWSFTIGSKKYDPKEVDLSSTLNINTKYYTKELHKACFVLPKFVEDLTR</sequence>
<dbReference type="EC" id="2.5.1.16" evidence="1"/>
<dbReference type="EMBL" id="CP000673">
    <property type="protein sequence ID" value="EDK35165.1"/>
    <property type="molecule type" value="Genomic_DNA"/>
</dbReference>
<dbReference type="RefSeq" id="WP_012103500.1">
    <property type="nucleotide sequence ID" value="NC_009706.1"/>
</dbReference>
<dbReference type="SMR" id="A5N219"/>
<dbReference type="STRING" id="431943.CKL_3157"/>
<dbReference type="KEGG" id="ckl:CKL_3157"/>
<dbReference type="eggNOG" id="COG0421">
    <property type="taxonomic scope" value="Bacteria"/>
</dbReference>
<dbReference type="HOGENOM" id="CLU_048199_0_0_9"/>
<dbReference type="UniPathway" id="UPA00248">
    <property type="reaction ID" value="UER00314"/>
</dbReference>
<dbReference type="Proteomes" id="UP000002411">
    <property type="component" value="Chromosome"/>
</dbReference>
<dbReference type="GO" id="GO:0005829">
    <property type="term" value="C:cytosol"/>
    <property type="evidence" value="ECO:0007669"/>
    <property type="project" value="TreeGrafter"/>
</dbReference>
<dbReference type="GO" id="GO:0004766">
    <property type="term" value="F:spermidine synthase activity"/>
    <property type="evidence" value="ECO:0007669"/>
    <property type="project" value="UniProtKB-UniRule"/>
</dbReference>
<dbReference type="GO" id="GO:0008295">
    <property type="term" value="P:spermidine biosynthetic process"/>
    <property type="evidence" value="ECO:0007669"/>
    <property type="project" value="UniProtKB-UniRule"/>
</dbReference>
<dbReference type="CDD" id="cd02440">
    <property type="entry name" value="AdoMet_MTases"/>
    <property type="match status" value="1"/>
</dbReference>
<dbReference type="FunFam" id="3.40.50.150:FF:000056">
    <property type="entry name" value="Polyamine aminopropyltransferase"/>
    <property type="match status" value="1"/>
</dbReference>
<dbReference type="Gene3D" id="2.30.140.10">
    <property type="entry name" value="Spermidine synthase, tetramerisation domain"/>
    <property type="match status" value="1"/>
</dbReference>
<dbReference type="Gene3D" id="3.40.50.150">
    <property type="entry name" value="Vaccinia Virus protein VP39"/>
    <property type="match status" value="1"/>
</dbReference>
<dbReference type="HAMAP" id="MF_00198">
    <property type="entry name" value="Spermidine_synth"/>
    <property type="match status" value="1"/>
</dbReference>
<dbReference type="InterPro" id="IPR030374">
    <property type="entry name" value="PABS"/>
</dbReference>
<dbReference type="InterPro" id="IPR030373">
    <property type="entry name" value="PABS_CS"/>
</dbReference>
<dbReference type="InterPro" id="IPR029063">
    <property type="entry name" value="SAM-dependent_MTases_sf"/>
</dbReference>
<dbReference type="InterPro" id="IPR001045">
    <property type="entry name" value="Spermi_synthase"/>
</dbReference>
<dbReference type="InterPro" id="IPR035246">
    <property type="entry name" value="Spermidine_synt_N"/>
</dbReference>
<dbReference type="InterPro" id="IPR037163">
    <property type="entry name" value="Spermidine_synt_N_sf"/>
</dbReference>
<dbReference type="NCBIfam" id="NF002010">
    <property type="entry name" value="PRK00811.1"/>
    <property type="match status" value="1"/>
</dbReference>
<dbReference type="NCBIfam" id="TIGR00417">
    <property type="entry name" value="speE"/>
    <property type="match status" value="1"/>
</dbReference>
<dbReference type="PANTHER" id="PTHR11558:SF11">
    <property type="entry name" value="SPERMIDINE SYNTHASE"/>
    <property type="match status" value="1"/>
</dbReference>
<dbReference type="PANTHER" id="PTHR11558">
    <property type="entry name" value="SPERMIDINE/SPERMINE SYNTHASE"/>
    <property type="match status" value="1"/>
</dbReference>
<dbReference type="Pfam" id="PF17284">
    <property type="entry name" value="Spermine_synt_N"/>
    <property type="match status" value="1"/>
</dbReference>
<dbReference type="Pfam" id="PF01564">
    <property type="entry name" value="Spermine_synth"/>
    <property type="match status" value="1"/>
</dbReference>
<dbReference type="SUPFAM" id="SSF53335">
    <property type="entry name" value="S-adenosyl-L-methionine-dependent methyltransferases"/>
    <property type="match status" value="1"/>
</dbReference>
<dbReference type="PROSITE" id="PS01330">
    <property type="entry name" value="PABS_1"/>
    <property type="match status" value="1"/>
</dbReference>
<dbReference type="PROSITE" id="PS51006">
    <property type="entry name" value="PABS_2"/>
    <property type="match status" value="1"/>
</dbReference>
<proteinExistence type="inferred from homology"/>
<gene>
    <name evidence="1" type="primary">speE</name>
    <name type="ordered locus">CKL_3157</name>
</gene>
<protein>
    <recommendedName>
        <fullName evidence="1">Polyamine aminopropyltransferase</fullName>
    </recommendedName>
    <alternativeName>
        <fullName evidence="1">Putrescine aminopropyltransferase</fullName>
        <shortName evidence="1">PAPT</shortName>
    </alternativeName>
    <alternativeName>
        <fullName evidence="1">Spermidine synthase</fullName>
        <shortName evidence="1">SPDS</shortName>
        <shortName evidence="1">SPDSY</shortName>
        <ecNumber evidence="1">2.5.1.16</ecNumber>
    </alternativeName>
</protein>
<feature type="chain" id="PRO_1000197466" description="Polyamine aminopropyltransferase">
    <location>
        <begin position="1"/>
        <end position="275"/>
    </location>
</feature>
<feature type="domain" description="PABS" evidence="1">
    <location>
        <begin position="2"/>
        <end position="235"/>
    </location>
</feature>
<feature type="active site" description="Proton acceptor" evidence="1">
    <location>
        <position position="155"/>
    </location>
</feature>
<feature type="binding site" evidence="1">
    <location>
        <position position="31"/>
    </location>
    <ligand>
        <name>S-methyl-5'-thioadenosine</name>
        <dbReference type="ChEBI" id="CHEBI:17509"/>
    </ligand>
</feature>
<feature type="binding site" evidence="1">
    <location>
        <position position="62"/>
    </location>
    <ligand>
        <name>spermidine</name>
        <dbReference type="ChEBI" id="CHEBI:57834"/>
    </ligand>
</feature>
<feature type="binding site" evidence="1">
    <location>
        <position position="86"/>
    </location>
    <ligand>
        <name>spermidine</name>
        <dbReference type="ChEBI" id="CHEBI:57834"/>
    </ligand>
</feature>
<feature type="binding site" evidence="1">
    <location>
        <position position="106"/>
    </location>
    <ligand>
        <name>S-methyl-5'-thioadenosine</name>
        <dbReference type="ChEBI" id="CHEBI:17509"/>
    </ligand>
</feature>
<feature type="binding site" evidence="1">
    <location>
        <begin position="137"/>
        <end position="138"/>
    </location>
    <ligand>
        <name>S-methyl-5'-thioadenosine</name>
        <dbReference type="ChEBI" id="CHEBI:17509"/>
    </ligand>
</feature>
<feature type="binding site" evidence="1">
    <location>
        <begin position="155"/>
        <end position="158"/>
    </location>
    <ligand>
        <name>spermidine</name>
        <dbReference type="ChEBI" id="CHEBI:57834"/>
    </ligand>
</feature>